<comment type="cofactor">
    <cofactor evidence="1">
        <name>Zn(2+)</name>
        <dbReference type="ChEBI" id="CHEBI:29105"/>
    </cofactor>
    <text evidence="1">Binds 1 zinc ion per subunit.</text>
</comment>
<comment type="subcellular location">
    <subcellularLocation>
        <location evidence="1">Cell inner membrane</location>
        <topology evidence="1">Multi-pass membrane protein</topology>
    </subcellularLocation>
</comment>
<comment type="similarity">
    <text evidence="1">Belongs to the peptidase M48B family.</text>
</comment>
<dbReference type="EC" id="3.4.24.-" evidence="1"/>
<dbReference type="EMBL" id="AE008922">
    <property type="protein sequence ID" value="AAM41571.1"/>
    <property type="molecule type" value="Genomic_DNA"/>
</dbReference>
<dbReference type="RefSeq" id="NP_637647.1">
    <property type="nucleotide sequence ID" value="NC_003902.1"/>
</dbReference>
<dbReference type="RefSeq" id="WP_011037436.1">
    <property type="nucleotide sequence ID" value="NC_003902.1"/>
</dbReference>
<dbReference type="SMR" id="Q8P8F0"/>
<dbReference type="STRING" id="190485.XCC2292"/>
<dbReference type="MEROPS" id="M48.002"/>
<dbReference type="EnsemblBacteria" id="AAM41571">
    <property type="protein sequence ID" value="AAM41571"/>
    <property type="gene ID" value="XCC2292"/>
</dbReference>
<dbReference type="KEGG" id="xcc:XCC2292"/>
<dbReference type="PATRIC" id="fig|190485.4.peg.2442"/>
<dbReference type="eggNOG" id="COG0501">
    <property type="taxonomic scope" value="Bacteria"/>
</dbReference>
<dbReference type="HOGENOM" id="CLU_042266_1_0_6"/>
<dbReference type="OrthoDB" id="15218at2"/>
<dbReference type="Proteomes" id="UP000001010">
    <property type="component" value="Chromosome"/>
</dbReference>
<dbReference type="GO" id="GO:0005886">
    <property type="term" value="C:plasma membrane"/>
    <property type="evidence" value="ECO:0007669"/>
    <property type="project" value="UniProtKB-SubCell"/>
</dbReference>
<dbReference type="GO" id="GO:0004222">
    <property type="term" value="F:metalloendopeptidase activity"/>
    <property type="evidence" value="ECO:0007669"/>
    <property type="project" value="UniProtKB-UniRule"/>
</dbReference>
<dbReference type="GO" id="GO:0008270">
    <property type="term" value="F:zinc ion binding"/>
    <property type="evidence" value="ECO:0007669"/>
    <property type="project" value="UniProtKB-UniRule"/>
</dbReference>
<dbReference type="GO" id="GO:0006508">
    <property type="term" value="P:proteolysis"/>
    <property type="evidence" value="ECO:0007669"/>
    <property type="project" value="UniProtKB-KW"/>
</dbReference>
<dbReference type="CDD" id="cd07335">
    <property type="entry name" value="M48B_HtpX_like"/>
    <property type="match status" value="1"/>
</dbReference>
<dbReference type="Gene3D" id="3.30.2010.10">
    <property type="entry name" value="Metalloproteases ('zincins'), catalytic domain"/>
    <property type="match status" value="1"/>
</dbReference>
<dbReference type="HAMAP" id="MF_00188">
    <property type="entry name" value="Pept_M48_protease_HtpX"/>
    <property type="match status" value="1"/>
</dbReference>
<dbReference type="InterPro" id="IPR050083">
    <property type="entry name" value="HtpX_protease"/>
</dbReference>
<dbReference type="InterPro" id="IPR022919">
    <property type="entry name" value="Pept_M48_protease_HtpX"/>
</dbReference>
<dbReference type="InterPro" id="IPR001915">
    <property type="entry name" value="Peptidase_M48"/>
</dbReference>
<dbReference type="NCBIfam" id="NF003965">
    <property type="entry name" value="PRK05457.1"/>
    <property type="match status" value="1"/>
</dbReference>
<dbReference type="PANTHER" id="PTHR43221">
    <property type="entry name" value="PROTEASE HTPX"/>
    <property type="match status" value="1"/>
</dbReference>
<dbReference type="PANTHER" id="PTHR43221:SF1">
    <property type="entry name" value="PROTEASE HTPX"/>
    <property type="match status" value="1"/>
</dbReference>
<dbReference type="Pfam" id="PF01435">
    <property type="entry name" value="Peptidase_M48"/>
    <property type="match status" value="1"/>
</dbReference>
<proteinExistence type="inferred from homology"/>
<sequence length="292" mass="31340">MFNRVVLFLLTNFAVLILAGIVMSVLGVNPTQMSGLLVMAAIFGFGGSFISLLLSKFMAKRSTGAQVITEPRTQTERWLVDTVRRQAQAAGIGMPEVAIYDGPEINAFATGANRNNALVAVSTGLLQHMREDEAEAVLGHEIAHIANGDMVTMALLQGVLNTFVIVLARVVGGIIDSALSGNRDSGRGFAYYIIVFVLEMVFGLFATMIAMWFSRRREFRADAGGAQLAGRNKMIAALERLSLNHGQNTLPSQVQAFGISGGVGEGLRRLFLSHPPLTERIAALRASNGTAM</sequence>
<feature type="chain" id="PRO_0000138908" description="Protease HtpX">
    <location>
        <begin position="1"/>
        <end position="292"/>
    </location>
</feature>
<feature type="transmembrane region" description="Helical" evidence="1">
    <location>
        <begin position="5"/>
        <end position="25"/>
    </location>
</feature>
<feature type="transmembrane region" description="Helical" evidence="1">
    <location>
        <begin position="35"/>
        <end position="55"/>
    </location>
</feature>
<feature type="transmembrane region" description="Helical" evidence="1">
    <location>
        <begin position="155"/>
        <end position="175"/>
    </location>
</feature>
<feature type="transmembrane region" description="Helical" evidence="1">
    <location>
        <begin position="193"/>
        <end position="213"/>
    </location>
</feature>
<feature type="active site" evidence="1">
    <location>
        <position position="141"/>
    </location>
</feature>
<feature type="binding site" evidence="1">
    <location>
        <position position="140"/>
    </location>
    <ligand>
        <name>Zn(2+)</name>
        <dbReference type="ChEBI" id="CHEBI:29105"/>
        <note>catalytic</note>
    </ligand>
</feature>
<feature type="binding site" evidence="1">
    <location>
        <position position="144"/>
    </location>
    <ligand>
        <name>Zn(2+)</name>
        <dbReference type="ChEBI" id="CHEBI:29105"/>
        <note>catalytic</note>
    </ligand>
</feature>
<feature type="binding site" evidence="1">
    <location>
        <position position="218"/>
    </location>
    <ligand>
        <name>Zn(2+)</name>
        <dbReference type="ChEBI" id="CHEBI:29105"/>
        <note>catalytic</note>
    </ligand>
</feature>
<reference key="1">
    <citation type="journal article" date="2002" name="Nature">
        <title>Comparison of the genomes of two Xanthomonas pathogens with differing host specificities.</title>
        <authorList>
            <person name="da Silva A.C.R."/>
            <person name="Ferro J.A."/>
            <person name="Reinach F.C."/>
            <person name="Farah C.S."/>
            <person name="Furlan L.R."/>
            <person name="Quaggio R.B."/>
            <person name="Monteiro-Vitorello C.B."/>
            <person name="Van Sluys M.A."/>
            <person name="Almeida N.F. Jr."/>
            <person name="Alves L.M.C."/>
            <person name="do Amaral A.M."/>
            <person name="Bertolini M.C."/>
            <person name="Camargo L.E.A."/>
            <person name="Camarotte G."/>
            <person name="Cannavan F."/>
            <person name="Cardozo J."/>
            <person name="Chambergo F."/>
            <person name="Ciapina L.P."/>
            <person name="Cicarelli R.M.B."/>
            <person name="Coutinho L.L."/>
            <person name="Cursino-Santos J.R."/>
            <person name="El-Dorry H."/>
            <person name="Faria J.B."/>
            <person name="Ferreira A.J.S."/>
            <person name="Ferreira R.C.C."/>
            <person name="Ferro M.I.T."/>
            <person name="Formighieri E.F."/>
            <person name="Franco M.C."/>
            <person name="Greggio C.C."/>
            <person name="Gruber A."/>
            <person name="Katsuyama A.M."/>
            <person name="Kishi L.T."/>
            <person name="Leite R.P."/>
            <person name="Lemos E.G.M."/>
            <person name="Lemos M.V.F."/>
            <person name="Locali E.C."/>
            <person name="Machado M.A."/>
            <person name="Madeira A.M.B.N."/>
            <person name="Martinez-Rossi N.M."/>
            <person name="Martins E.C."/>
            <person name="Meidanis J."/>
            <person name="Menck C.F.M."/>
            <person name="Miyaki C.Y."/>
            <person name="Moon D.H."/>
            <person name="Moreira L.M."/>
            <person name="Novo M.T.M."/>
            <person name="Okura V.K."/>
            <person name="Oliveira M.C."/>
            <person name="Oliveira V.R."/>
            <person name="Pereira H.A."/>
            <person name="Rossi A."/>
            <person name="Sena J.A.D."/>
            <person name="Silva C."/>
            <person name="de Souza R.F."/>
            <person name="Spinola L.A.F."/>
            <person name="Takita M.A."/>
            <person name="Tamura R.E."/>
            <person name="Teixeira E.C."/>
            <person name="Tezza R.I.D."/>
            <person name="Trindade dos Santos M."/>
            <person name="Truffi D."/>
            <person name="Tsai S.M."/>
            <person name="White F.F."/>
            <person name="Setubal J.C."/>
            <person name="Kitajima J.P."/>
        </authorList>
    </citation>
    <scope>NUCLEOTIDE SEQUENCE [LARGE SCALE GENOMIC DNA]</scope>
    <source>
        <strain>ATCC 33913 / DSM 3586 / NCPPB 528 / LMG 568 / P 25</strain>
    </source>
</reference>
<gene>
    <name evidence="1" type="primary">htpX</name>
    <name type="ordered locus">XCC2292</name>
</gene>
<protein>
    <recommendedName>
        <fullName evidence="1">Protease HtpX</fullName>
        <ecNumber evidence="1">3.4.24.-</ecNumber>
    </recommendedName>
    <alternativeName>
        <fullName evidence="1">Heat shock protein HtpX</fullName>
    </alternativeName>
</protein>
<accession>Q8P8F0</accession>
<keyword id="KW-0997">Cell inner membrane</keyword>
<keyword id="KW-1003">Cell membrane</keyword>
<keyword id="KW-0378">Hydrolase</keyword>
<keyword id="KW-0472">Membrane</keyword>
<keyword id="KW-0479">Metal-binding</keyword>
<keyword id="KW-0482">Metalloprotease</keyword>
<keyword id="KW-0645">Protease</keyword>
<keyword id="KW-1185">Reference proteome</keyword>
<keyword id="KW-0812">Transmembrane</keyword>
<keyword id="KW-1133">Transmembrane helix</keyword>
<keyword id="KW-0862">Zinc</keyword>
<name>HTPX_XANCP</name>
<organism>
    <name type="scientific">Xanthomonas campestris pv. campestris (strain ATCC 33913 / DSM 3586 / NCPPB 528 / LMG 568 / P 25)</name>
    <dbReference type="NCBI Taxonomy" id="190485"/>
    <lineage>
        <taxon>Bacteria</taxon>
        <taxon>Pseudomonadati</taxon>
        <taxon>Pseudomonadota</taxon>
        <taxon>Gammaproteobacteria</taxon>
        <taxon>Lysobacterales</taxon>
        <taxon>Lysobacteraceae</taxon>
        <taxon>Xanthomonas</taxon>
    </lineage>
</organism>
<evidence type="ECO:0000255" key="1">
    <source>
        <dbReference type="HAMAP-Rule" id="MF_00188"/>
    </source>
</evidence>